<gene>
    <name evidence="1" type="primary">fbp</name>
    <name type="ordered locus">STM4415</name>
</gene>
<evidence type="ECO:0000255" key="1">
    <source>
        <dbReference type="HAMAP-Rule" id="MF_01855"/>
    </source>
</evidence>
<feature type="chain" id="PRO_0000364697" description="Fructose-1,6-bisphosphatase class 1">
    <location>
        <begin position="1"/>
        <end position="332"/>
    </location>
</feature>
<feature type="binding site" evidence="1">
    <location>
        <position position="89"/>
    </location>
    <ligand>
        <name>Mg(2+)</name>
        <dbReference type="ChEBI" id="CHEBI:18420"/>
        <label>1</label>
    </ligand>
</feature>
<feature type="binding site" evidence="1">
    <location>
        <position position="110"/>
    </location>
    <ligand>
        <name>Mg(2+)</name>
        <dbReference type="ChEBI" id="CHEBI:18420"/>
        <label>1</label>
    </ligand>
</feature>
<feature type="binding site" evidence="1">
    <location>
        <position position="110"/>
    </location>
    <ligand>
        <name>Mg(2+)</name>
        <dbReference type="ChEBI" id="CHEBI:18420"/>
        <label>2</label>
    </ligand>
</feature>
<feature type="binding site" evidence="1">
    <location>
        <position position="112"/>
    </location>
    <ligand>
        <name>Mg(2+)</name>
        <dbReference type="ChEBI" id="CHEBI:18420"/>
        <label>1</label>
    </ligand>
</feature>
<feature type="binding site" evidence="1">
    <location>
        <begin position="113"/>
        <end position="116"/>
    </location>
    <ligand>
        <name>substrate</name>
    </ligand>
</feature>
<feature type="binding site" evidence="1">
    <location>
        <position position="113"/>
    </location>
    <ligand>
        <name>Mg(2+)</name>
        <dbReference type="ChEBI" id="CHEBI:18420"/>
        <label>2</label>
    </ligand>
</feature>
<feature type="binding site" evidence="1">
    <location>
        <position position="206"/>
    </location>
    <ligand>
        <name>substrate</name>
    </ligand>
</feature>
<feature type="binding site" evidence="1">
    <location>
        <position position="239"/>
    </location>
    <ligand>
        <name>substrate</name>
    </ligand>
</feature>
<feature type="binding site" evidence="1">
    <location>
        <begin position="257"/>
        <end position="259"/>
    </location>
    <ligand>
        <name>substrate</name>
    </ligand>
</feature>
<feature type="binding site" evidence="1">
    <location>
        <position position="269"/>
    </location>
    <ligand>
        <name>substrate</name>
    </ligand>
</feature>
<feature type="binding site" evidence="1">
    <location>
        <position position="275"/>
    </location>
    <ligand>
        <name>Mg(2+)</name>
        <dbReference type="ChEBI" id="CHEBI:18420"/>
        <label>2</label>
    </ligand>
</feature>
<name>F16PA_SALTY</name>
<dbReference type="EC" id="3.1.3.11" evidence="1"/>
<dbReference type="EMBL" id="AE006468">
    <property type="protein sequence ID" value="AAL23235.1"/>
    <property type="molecule type" value="Genomic_DNA"/>
</dbReference>
<dbReference type="RefSeq" id="NP_463276.1">
    <property type="nucleotide sequence ID" value="NC_003197.2"/>
</dbReference>
<dbReference type="RefSeq" id="WP_000853764.1">
    <property type="nucleotide sequence ID" value="NC_003197.2"/>
</dbReference>
<dbReference type="SMR" id="Q8ZK67"/>
<dbReference type="STRING" id="99287.STM4415"/>
<dbReference type="PaxDb" id="99287-STM4415"/>
<dbReference type="GeneID" id="1255941"/>
<dbReference type="KEGG" id="stm:STM4415"/>
<dbReference type="PATRIC" id="fig|99287.12.peg.4642"/>
<dbReference type="HOGENOM" id="CLU_039977_2_2_6"/>
<dbReference type="OMA" id="YIPENCP"/>
<dbReference type="PhylomeDB" id="Q8ZK67"/>
<dbReference type="BioCyc" id="SENT99287:STM4415-MONOMER"/>
<dbReference type="UniPathway" id="UPA00138"/>
<dbReference type="Proteomes" id="UP000001014">
    <property type="component" value="Chromosome"/>
</dbReference>
<dbReference type="GO" id="GO:0005737">
    <property type="term" value="C:cytoplasm"/>
    <property type="evidence" value="ECO:0000318"/>
    <property type="project" value="GO_Central"/>
</dbReference>
<dbReference type="GO" id="GO:0005829">
    <property type="term" value="C:cytosol"/>
    <property type="evidence" value="ECO:0000318"/>
    <property type="project" value="GO_Central"/>
</dbReference>
<dbReference type="GO" id="GO:0042132">
    <property type="term" value="F:fructose 1,6-bisphosphate 1-phosphatase activity"/>
    <property type="evidence" value="ECO:0000318"/>
    <property type="project" value="GO_Central"/>
</dbReference>
<dbReference type="GO" id="GO:0000287">
    <property type="term" value="F:magnesium ion binding"/>
    <property type="evidence" value="ECO:0007669"/>
    <property type="project" value="UniProtKB-UniRule"/>
</dbReference>
<dbReference type="GO" id="GO:0030388">
    <property type="term" value="P:fructose 1,6-bisphosphate metabolic process"/>
    <property type="evidence" value="ECO:0000318"/>
    <property type="project" value="GO_Central"/>
</dbReference>
<dbReference type="GO" id="GO:0006002">
    <property type="term" value="P:fructose 6-phosphate metabolic process"/>
    <property type="evidence" value="ECO:0000318"/>
    <property type="project" value="GO_Central"/>
</dbReference>
<dbReference type="GO" id="GO:0006000">
    <property type="term" value="P:fructose metabolic process"/>
    <property type="evidence" value="ECO:0000318"/>
    <property type="project" value="GO_Central"/>
</dbReference>
<dbReference type="GO" id="GO:0006094">
    <property type="term" value="P:gluconeogenesis"/>
    <property type="evidence" value="ECO:0000318"/>
    <property type="project" value="GO_Central"/>
</dbReference>
<dbReference type="CDD" id="cd00354">
    <property type="entry name" value="FBPase"/>
    <property type="match status" value="1"/>
</dbReference>
<dbReference type="FunFam" id="3.30.540.10:FF:000002">
    <property type="entry name" value="Fructose-1,6-bisphosphatase class 1"/>
    <property type="match status" value="1"/>
</dbReference>
<dbReference type="FunFam" id="3.40.190.80:FF:000001">
    <property type="entry name" value="Fructose-1,6-bisphosphatase class 1"/>
    <property type="match status" value="1"/>
</dbReference>
<dbReference type="Gene3D" id="3.40.190.80">
    <property type="match status" value="1"/>
</dbReference>
<dbReference type="Gene3D" id="3.30.540.10">
    <property type="entry name" value="Fructose-1,6-Bisphosphatase, subunit A, domain 1"/>
    <property type="match status" value="1"/>
</dbReference>
<dbReference type="HAMAP" id="MF_01855">
    <property type="entry name" value="FBPase_class1"/>
    <property type="match status" value="1"/>
</dbReference>
<dbReference type="InterPro" id="IPR044015">
    <property type="entry name" value="FBPase_C_dom"/>
</dbReference>
<dbReference type="InterPro" id="IPR000146">
    <property type="entry name" value="FBPase_class-1"/>
</dbReference>
<dbReference type="InterPro" id="IPR033391">
    <property type="entry name" value="FBPase_N"/>
</dbReference>
<dbReference type="InterPro" id="IPR028343">
    <property type="entry name" value="FBPtase"/>
</dbReference>
<dbReference type="InterPro" id="IPR020548">
    <property type="entry name" value="Fructose_bisphosphatase_AS"/>
</dbReference>
<dbReference type="NCBIfam" id="NF006778">
    <property type="entry name" value="PRK09293.1-1"/>
    <property type="match status" value="1"/>
</dbReference>
<dbReference type="NCBIfam" id="NF006779">
    <property type="entry name" value="PRK09293.1-3"/>
    <property type="match status" value="1"/>
</dbReference>
<dbReference type="PANTHER" id="PTHR11556">
    <property type="entry name" value="FRUCTOSE-1,6-BISPHOSPHATASE-RELATED"/>
    <property type="match status" value="1"/>
</dbReference>
<dbReference type="PANTHER" id="PTHR11556:SF35">
    <property type="entry name" value="SEDOHEPTULOSE-1,7-BISPHOSPHATASE, CHLOROPLASTIC"/>
    <property type="match status" value="1"/>
</dbReference>
<dbReference type="Pfam" id="PF00316">
    <property type="entry name" value="FBPase"/>
    <property type="match status" value="1"/>
</dbReference>
<dbReference type="Pfam" id="PF18913">
    <property type="entry name" value="FBPase_C"/>
    <property type="match status" value="1"/>
</dbReference>
<dbReference type="PIRSF" id="PIRSF500210">
    <property type="entry name" value="FBPtase"/>
    <property type="match status" value="1"/>
</dbReference>
<dbReference type="PIRSF" id="PIRSF000904">
    <property type="entry name" value="FBPtase_SBPase"/>
    <property type="match status" value="1"/>
</dbReference>
<dbReference type="PRINTS" id="PR00115">
    <property type="entry name" value="F16BPHPHTASE"/>
</dbReference>
<dbReference type="SUPFAM" id="SSF56655">
    <property type="entry name" value="Carbohydrate phosphatase"/>
    <property type="match status" value="1"/>
</dbReference>
<dbReference type="PROSITE" id="PS00124">
    <property type="entry name" value="FBPASE"/>
    <property type="match status" value="1"/>
</dbReference>
<protein>
    <recommendedName>
        <fullName evidence="1">Fructose-1,6-bisphosphatase class 1</fullName>
        <shortName evidence="1">FBPase class 1</shortName>
        <ecNumber evidence="1">3.1.3.11</ecNumber>
    </recommendedName>
    <alternativeName>
        <fullName evidence="1">D-fructose-1,6-bisphosphate 1-phosphohydrolase class 1</fullName>
    </alternativeName>
</protein>
<organism>
    <name type="scientific">Salmonella typhimurium (strain LT2 / SGSC1412 / ATCC 700720)</name>
    <dbReference type="NCBI Taxonomy" id="99287"/>
    <lineage>
        <taxon>Bacteria</taxon>
        <taxon>Pseudomonadati</taxon>
        <taxon>Pseudomonadota</taxon>
        <taxon>Gammaproteobacteria</taxon>
        <taxon>Enterobacterales</taxon>
        <taxon>Enterobacteriaceae</taxon>
        <taxon>Salmonella</taxon>
    </lineage>
</organism>
<accession>Q8ZK67</accession>
<comment type="catalytic activity">
    <reaction evidence="1">
        <text>beta-D-fructose 1,6-bisphosphate + H2O = beta-D-fructose 6-phosphate + phosphate</text>
        <dbReference type="Rhea" id="RHEA:11064"/>
        <dbReference type="ChEBI" id="CHEBI:15377"/>
        <dbReference type="ChEBI" id="CHEBI:32966"/>
        <dbReference type="ChEBI" id="CHEBI:43474"/>
        <dbReference type="ChEBI" id="CHEBI:57634"/>
        <dbReference type="EC" id="3.1.3.11"/>
    </reaction>
</comment>
<comment type="cofactor">
    <cofactor evidence="1">
        <name>Mg(2+)</name>
        <dbReference type="ChEBI" id="CHEBI:18420"/>
    </cofactor>
    <text evidence="1">Binds 2 magnesium ions per subunit.</text>
</comment>
<comment type="pathway">
    <text evidence="1">Carbohydrate biosynthesis; gluconeogenesis.</text>
</comment>
<comment type="subunit">
    <text evidence="1">Homotetramer.</text>
</comment>
<comment type="subcellular location">
    <subcellularLocation>
        <location evidence="1">Cytoplasm</location>
    </subcellularLocation>
</comment>
<comment type="similarity">
    <text evidence="1">Belongs to the FBPase class 1 family.</text>
</comment>
<sequence>MKTLGEFIVEKQHEFSQATGELTALLSAIKLGAKIIHRDINKAGLVDILGASGAENVQGEVQQKLDLFANEKLKAALKARDIVAGIASEEEDEIVVFEGCEHAKYVVLMDPLDGSSNIDVNVSVGTIFSIYRRVTPVGTPVTEEDFLQPGNKQVAAGYVVYGSSTMLVYTTGCGVHAFTYDPSLGVFCLCQERMRFPEKGKTYSINEGNYIKFPNGVKKYIKFCQEEDSSTSRPYTSRYIGSLVADFHRNLLKGGIYLYPSTASHPQGKLRLLYECNPMAFLAEQAGGKASDGKERILDIIPESLHQRRSFFVGNRHMVDDVERFIREYPDA</sequence>
<proteinExistence type="inferred from homology"/>
<reference key="1">
    <citation type="journal article" date="2001" name="Nature">
        <title>Complete genome sequence of Salmonella enterica serovar Typhimurium LT2.</title>
        <authorList>
            <person name="McClelland M."/>
            <person name="Sanderson K.E."/>
            <person name="Spieth J."/>
            <person name="Clifton S.W."/>
            <person name="Latreille P."/>
            <person name="Courtney L."/>
            <person name="Porwollik S."/>
            <person name="Ali J."/>
            <person name="Dante M."/>
            <person name="Du F."/>
            <person name="Hou S."/>
            <person name="Layman D."/>
            <person name="Leonard S."/>
            <person name="Nguyen C."/>
            <person name="Scott K."/>
            <person name="Holmes A."/>
            <person name="Grewal N."/>
            <person name="Mulvaney E."/>
            <person name="Ryan E."/>
            <person name="Sun H."/>
            <person name="Florea L."/>
            <person name="Miller W."/>
            <person name="Stoneking T."/>
            <person name="Nhan M."/>
            <person name="Waterston R."/>
            <person name="Wilson R.K."/>
        </authorList>
    </citation>
    <scope>NUCLEOTIDE SEQUENCE [LARGE SCALE GENOMIC DNA]</scope>
    <source>
        <strain>LT2 / SGSC1412 / ATCC 700720</strain>
    </source>
</reference>
<keyword id="KW-0119">Carbohydrate metabolism</keyword>
<keyword id="KW-0963">Cytoplasm</keyword>
<keyword id="KW-0378">Hydrolase</keyword>
<keyword id="KW-0460">Magnesium</keyword>
<keyword id="KW-0479">Metal-binding</keyword>
<keyword id="KW-1185">Reference proteome</keyword>